<comment type="function">
    <text evidence="1">Involved in the de novo purine biosynthesis. Catalyzes the transfer of formate to 5-phospho-ribosyl-glycinamide (GAR), producing 5-phospho-ribosyl-N-formylglycinamide (FGAR). Formate is provided by PurU via hydrolysis of 10-formyl-tetrahydrofolate.</text>
</comment>
<comment type="catalytic activity">
    <reaction evidence="1">
        <text>N(1)-(5-phospho-beta-D-ribosyl)glycinamide + formate + ATP = N(2)-formyl-N(1)-(5-phospho-beta-D-ribosyl)glycinamide + ADP + phosphate + H(+)</text>
        <dbReference type="Rhea" id="RHEA:24829"/>
        <dbReference type="ChEBI" id="CHEBI:15378"/>
        <dbReference type="ChEBI" id="CHEBI:15740"/>
        <dbReference type="ChEBI" id="CHEBI:30616"/>
        <dbReference type="ChEBI" id="CHEBI:43474"/>
        <dbReference type="ChEBI" id="CHEBI:143788"/>
        <dbReference type="ChEBI" id="CHEBI:147286"/>
        <dbReference type="ChEBI" id="CHEBI:456216"/>
        <dbReference type="EC" id="6.3.1.21"/>
    </reaction>
    <physiologicalReaction direction="left-to-right" evidence="1">
        <dbReference type="Rhea" id="RHEA:24830"/>
    </physiologicalReaction>
</comment>
<comment type="pathway">
    <text evidence="1">Purine metabolism; IMP biosynthesis via de novo pathway; N(2)-formyl-N(1)-(5-phospho-D-ribosyl)glycinamide from N(1)-(5-phospho-D-ribosyl)glycinamide (formate route): step 1/1.</text>
</comment>
<comment type="subunit">
    <text evidence="1">Homodimer.</text>
</comment>
<comment type="similarity">
    <text evidence="1">Belongs to the PurK/PurT family.</text>
</comment>
<name>PURT_LEPIN</name>
<evidence type="ECO:0000255" key="1">
    <source>
        <dbReference type="HAMAP-Rule" id="MF_01643"/>
    </source>
</evidence>
<sequence length="387" mass="42952">MKKKILLLGSGELGKEFVIAAQRLGQYVIAVDSYDDAPAMQVAHEKEIINMLDGNLLDQIIAKHKPDLIVPEIEAIKTERFYEYEKQGYQVVPSAKAANFTMNRKSIRDLAAKDLKLLTAKYAYASSIDELIKATEILGFPCVVKPLMSSSGKGQSVIQSREEISKAWEASQTKGRAGAAEIIVEEFIPFESEITLLTVTQKNGKTLFCPPIGHRQERGDYQESWQPAAISEVQLKEAQRMADAVTKELTGFGIWGVEFFLTEDKVYFSELSPRPHDTGMVTLAGTQNFNEFELHLRAILGIPILEITLERKGASAVILASTENKTPEISGLDIASGMSESDFRIFGKPITRPYRRMGVTLSYSTKGEEISSLRKRAVLLASKIKVD</sequence>
<feature type="chain" id="PRO_0000319182" description="Formate-dependent phosphoribosylglycinamide formyltransferase">
    <location>
        <begin position="1"/>
        <end position="387"/>
    </location>
</feature>
<feature type="domain" description="ATP-grasp" evidence="1">
    <location>
        <begin position="109"/>
        <end position="300"/>
    </location>
</feature>
<feature type="binding site" evidence="1">
    <location>
        <begin position="12"/>
        <end position="13"/>
    </location>
    <ligand>
        <name>N(1)-(5-phospho-beta-D-ribosyl)glycinamide</name>
        <dbReference type="ChEBI" id="CHEBI:143788"/>
    </ligand>
</feature>
<feature type="binding site" evidence="1">
    <location>
        <position position="72"/>
    </location>
    <ligand>
        <name>N(1)-(5-phospho-beta-D-ribosyl)glycinamide</name>
        <dbReference type="ChEBI" id="CHEBI:143788"/>
    </ligand>
</feature>
<feature type="binding site" evidence="1">
    <location>
        <position position="104"/>
    </location>
    <ligand>
        <name>ATP</name>
        <dbReference type="ChEBI" id="CHEBI:30616"/>
    </ligand>
</feature>
<feature type="binding site" evidence="1">
    <location>
        <position position="145"/>
    </location>
    <ligand>
        <name>ATP</name>
        <dbReference type="ChEBI" id="CHEBI:30616"/>
    </ligand>
</feature>
<feature type="binding site" evidence="1">
    <location>
        <begin position="150"/>
        <end position="155"/>
    </location>
    <ligand>
        <name>ATP</name>
        <dbReference type="ChEBI" id="CHEBI:30616"/>
    </ligand>
</feature>
<feature type="binding site" evidence="1">
    <location>
        <begin position="185"/>
        <end position="188"/>
    </location>
    <ligand>
        <name>ATP</name>
        <dbReference type="ChEBI" id="CHEBI:30616"/>
    </ligand>
</feature>
<feature type="binding site" evidence="1">
    <location>
        <position position="193"/>
    </location>
    <ligand>
        <name>ATP</name>
        <dbReference type="ChEBI" id="CHEBI:30616"/>
    </ligand>
</feature>
<feature type="binding site" evidence="1">
    <location>
        <position position="258"/>
    </location>
    <ligand>
        <name>Mg(2+)</name>
        <dbReference type="ChEBI" id="CHEBI:18420"/>
    </ligand>
</feature>
<feature type="binding site" evidence="1">
    <location>
        <position position="270"/>
    </location>
    <ligand>
        <name>Mg(2+)</name>
        <dbReference type="ChEBI" id="CHEBI:18420"/>
    </ligand>
</feature>
<feature type="binding site" evidence="1">
    <location>
        <position position="277"/>
    </location>
    <ligand>
        <name>N(1)-(5-phospho-beta-D-ribosyl)glycinamide</name>
        <dbReference type="ChEBI" id="CHEBI:143788"/>
    </ligand>
</feature>
<feature type="binding site" evidence="1">
    <location>
        <position position="348"/>
    </location>
    <ligand>
        <name>N(1)-(5-phospho-beta-D-ribosyl)glycinamide</name>
        <dbReference type="ChEBI" id="CHEBI:143788"/>
    </ligand>
</feature>
<feature type="binding site" evidence="1">
    <location>
        <begin position="355"/>
        <end position="356"/>
    </location>
    <ligand>
        <name>N(1)-(5-phospho-beta-D-ribosyl)glycinamide</name>
        <dbReference type="ChEBI" id="CHEBI:143788"/>
    </ligand>
</feature>
<keyword id="KW-0067">ATP-binding</keyword>
<keyword id="KW-0436">Ligase</keyword>
<keyword id="KW-0460">Magnesium</keyword>
<keyword id="KW-0479">Metal-binding</keyword>
<keyword id="KW-0547">Nucleotide-binding</keyword>
<keyword id="KW-0658">Purine biosynthesis</keyword>
<keyword id="KW-1185">Reference proteome</keyword>
<protein>
    <recommendedName>
        <fullName evidence="1">Formate-dependent phosphoribosylglycinamide formyltransferase</fullName>
        <ecNumber evidence="1">6.3.1.21</ecNumber>
    </recommendedName>
    <alternativeName>
        <fullName evidence="1">5'-phosphoribosylglycinamide transformylase 2</fullName>
    </alternativeName>
    <alternativeName>
        <fullName evidence="1">Formate-dependent GAR transformylase</fullName>
    </alternativeName>
    <alternativeName>
        <fullName evidence="1">GAR transformylase 2</fullName>
        <shortName evidence="1">GART 2</shortName>
    </alternativeName>
    <alternativeName>
        <fullName evidence="1">Non-folate glycinamide ribonucleotide transformylase</fullName>
    </alternativeName>
    <alternativeName>
        <fullName evidence="1">Phosphoribosylglycinamide formyltransferase 2</fullName>
    </alternativeName>
</protein>
<accession>Q8EYF0</accession>
<gene>
    <name evidence="1" type="primary">purT</name>
    <name type="ordered locus">LA_4266</name>
</gene>
<reference key="1">
    <citation type="journal article" date="2003" name="Nature">
        <title>Unique physiological and pathogenic features of Leptospira interrogans revealed by whole-genome sequencing.</title>
        <authorList>
            <person name="Ren S.-X."/>
            <person name="Fu G."/>
            <person name="Jiang X.-G."/>
            <person name="Zeng R."/>
            <person name="Miao Y.-G."/>
            <person name="Xu H."/>
            <person name="Zhang Y.-X."/>
            <person name="Xiong H."/>
            <person name="Lu G."/>
            <person name="Lu L.-F."/>
            <person name="Jiang H.-Q."/>
            <person name="Jia J."/>
            <person name="Tu Y.-F."/>
            <person name="Jiang J.-X."/>
            <person name="Gu W.-Y."/>
            <person name="Zhang Y.-Q."/>
            <person name="Cai Z."/>
            <person name="Sheng H.-H."/>
            <person name="Yin H.-F."/>
            <person name="Zhang Y."/>
            <person name="Zhu G.-F."/>
            <person name="Wan M."/>
            <person name="Huang H.-L."/>
            <person name="Qian Z."/>
            <person name="Wang S.-Y."/>
            <person name="Ma W."/>
            <person name="Yao Z.-J."/>
            <person name="Shen Y."/>
            <person name="Qiang B.-Q."/>
            <person name="Xia Q.-C."/>
            <person name="Guo X.-K."/>
            <person name="Danchin A."/>
            <person name="Saint Girons I."/>
            <person name="Somerville R.L."/>
            <person name="Wen Y.-M."/>
            <person name="Shi M.-H."/>
            <person name="Chen Z."/>
            <person name="Xu J.-G."/>
            <person name="Zhao G.-P."/>
        </authorList>
    </citation>
    <scope>NUCLEOTIDE SEQUENCE [LARGE SCALE GENOMIC DNA]</scope>
    <source>
        <strain>56601</strain>
    </source>
</reference>
<proteinExistence type="inferred from homology"/>
<dbReference type="EC" id="6.3.1.21" evidence="1"/>
<dbReference type="EMBL" id="AE010300">
    <property type="protein sequence ID" value="AAN51464.1"/>
    <property type="molecule type" value="Genomic_DNA"/>
</dbReference>
<dbReference type="RefSeq" id="NP_714446.1">
    <property type="nucleotide sequence ID" value="NC_004342.2"/>
</dbReference>
<dbReference type="RefSeq" id="WP_000727141.1">
    <property type="nucleotide sequence ID" value="NC_004342.2"/>
</dbReference>
<dbReference type="SMR" id="Q8EYF0"/>
<dbReference type="FunCoup" id="Q8EYF0">
    <property type="interactions" value="80"/>
</dbReference>
<dbReference type="STRING" id="189518.LA_4266"/>
<dbReference type="PaxDb" id="189518-LA_4266"/>
<dbReference type="EnsemblBacteria" id="AAN51464">
    <property type="protein sequence ID" value="AAN51464"/>
    <property type="gene ID" value="LA_4266"/>
</dbReference>
<dbReference type="GeneID" id="61143277"/>
<dbReference type="KEGG" id="lil:LA_4266"/>
<dbReference type="PATRIC" id="fig|189518.3.peg.4237"/>
<dbReference type="HOGENOM" id="CLU_011534_1_3_12"/>
<dbReference type="InParanoid" id="Q8EYF0"/>
<dbReference type="OrthoDB" id="9804625at2"/>
<dbReference type="UniPathway" id="UPA00074">
    <property type="reaction ID" value="UER00127"/>
</dbReference>
<dbReference type="Proteomes" id="UP000001408">
    <property type="component" value="Chromosome I"/>
</dbReference>
<dbReference type="GO" id="GO:0005829">
    <property type="term" value="C:cytosol"/>
    <property type="evidence" value="ECO:0000318"/>
    <property type="project" value="GO_Central"/>
</dbReference>
<dbReference type="GO" id="GO:0005524">
    <property type="term" value="F:ATP binding"/>
    <property type="evidence" value="ECO:0007669"/>
    <property type="project" value="UniProtKB-UniRule"/>
</dbReference>
<dbReference type="GO" id="GO:0000287">
    <property type="term" value="F:magnesium ion binding"/>
    <property type="evidence" value="ECO:0007669"/>
    <property type="project" value="InterPro"/>
</dbReference>
<dbReference type="GO" id="GO:0043815">
    <property type="term" value="F:phosphoribosylglycinamide formyltransferase 2 activity"/>
    <property type="evidence" value="ECO:0007669"/>
    <property type="project" value="UniProtKB-UniRule"/>
</dbReference>
<dbReference type="GO" id="GO:0004644">
    <property type="term" value="F:phosphoribosylglycinamide formyltransferase activity"/>
    <property type="evidence" value="ECO:0007669"/>
    <property type="project" value="InterPro"/>
</dbReference>
<dbReference type="GO" id="GO:0006189">
    <property type="term" value="P:'de novo' IMP biosynthetic process"/>
    <property type="evidence" value="ECO:0007669"/>
    <property type="project" value="UniProtKB-UniRule"/>
</dbReference>
<dbReference type="FunFam" id="3.30.1490.20:FF:000013">
    <property type="entry name" value="Formate-dependent phosphoribosylglycinamide formyltransferase"/>
    <property type="match status" value="1"/>
</dbReference>
<dbReference type="FunFam" id="3.30.470.20:FF:000035">
    <property type="entry name" value="Formate-dependent phosphoribosylglycinamide formyltransferase"/>
    <property type="match status" value="1"/>
</dbReference>
<dbReference type="FunFam" id="3.40.50.20:FF:000022">
    <property type="entry name" value="Formate-dependent phosphoribosylglycinamide formyltransferase"/>
    <property type="match status" value="1"/>
</dbReference>
<dbReference type="Gene3D" id="3.40.50.20">
    <property type="match status" value="1"/>
</dbReference>
<dbReference type="Gene3D" id="3.30.1490.20">
    <property type="entry name" value="ATP-grasp fold, A domain"/>
    <property type="match status" value="1"/>
</dbReference>
<dbReference type="Gene3D" id="3.30.470.20">
    <property type="entry name" value="ATP-grasp fold, B domain"/>
    <property type="match status" value="1"/>
</dbReference>
<dbReference type="HAMAP" id="MF_01643">
    <property type="entry name" value="PurT"/>
    <property type="match status" value="1"/>
</dbReference>
<dbReference type="InterPro" id="IPR011761">
    <property type="entry name" value="ATP-grasp"/>
</dbReference>
<dbReference type="InterPro" id="IPR003135">
    <property type="entry name" value="ATP-grasp_carboxylate-amine"/>
</dbReference>
<dbReference type="InterPro" id="IPR013815">
    <property type="entry name" value="ATP_grasp_subdomain_1"/>
</dbReference>
<dbReference type="InterPro" id="IPR016185">
    <property type="entry name" value="PreATP-grasp_dom_sf"/>
</dbReference>
<dbReference type="InterPro" id="IPR005862">
    <property type="entry name" value="PurT"/>
</dbReference>
<dbReference type="InterPro" id="IPR054350">
    <property type="entry name" value="PurT/PurK_preATP-grasp"/>
</dbReference>
<dbReference type="InterPro" id="IPR048740">
    <property type="entry name" value="PurT_C"/>
</dbReference>
<dbReference type="InterPro" id="IPR011054">
    <property type="entry name" value="Rudment_hybrid_motif"/>
</dbReference>
<dbReference type="NCBIfam" id="NF006766">
    <property type="entry name" value="PRK09288.1"/>
    <property type="match status" value="1"/>
</dbReference>
<dbReference type="NCBIfam" id="TIGR01142">
    <property type="entry name" value="purT"/>
    <property type="match status" value="1"/>
</dbReference>
<dbReference type="PANTHER" id="PTHR43055">
    <property type="entry name" value="FORMATE-DEPENDENT PHOSPHORIBOSYLGLYCINAMIDE FORMYLTRANSFERASE"/>
    <property type="match status" value="1"/>
</dbReference>
<dbReference type="PANTHER" id="PTHR43055:SF1">
    <property type="entry name" value="FORMATE-DEPENDENT PHOSPHORIBOSYLGLYCINAMIDE FORMYLTRANSFERASE"/>
    <property type="match status" value="1"/>
</dbReference>
<dbReference type="Pfam" id="PF02222">
    <property type="entry name" value="ATP-grasp"/>
    <property type="match status" value="1"/>
</dbReference>
<dbReference type="Pfam" id="PF21244">
    <property type="entry name" value="PurT_C"/>
    <property type="match status" value="1"/>
</dbReference>
<dbReference type="Pfam" id="PF22660">
    <property type="entry name" value="RS_preATP-grasp-like"/>
    <property type="match status" value="1"/>
</dbReference>
<dbReference type="SUPFAM" id="SSF56059">
    <property type="entry name" value="Glutathione synthetase ATP-binding domain-like"/>
    <property type="match status" value="1"/>
</dbReference>
<dbReference type="SUPFAM" id="SSF52440">
    <property type="entry name" value="PreATP-grasp domain"/>
    <property type="match status" value="1"/>
</dbReference>
<dbReference type="SUPFAM" id="SSF51246">
    <property type="entry name" value="Rudiment single hybrid motif"/>
    <property type="match status" value="1"/>
</dbReference>
<dbReference type="PROSITE" id="PS50975">
    <property type="entry name" value="ATP_GRASP"/>
    <property type="match status" value="1"/>
</dbReference>
<organism>
    <name type="scientific">Leptospira interrogans serogroup Icterohaemorrhagiae serovar Lai (strain 56601)</name>
    <dbReference type="NCBI Taxonomy" id="189518"/>
    <lineage>
        <taxon>Bacteria</taxon>
        <taxon>Pseudomonadati</taxon>
        <taxon>Spirochaetota</taxon>
        <taxon>Spirochaetia</taxon>
        <taxon>Leptospirales</taxon>
        <taxon>Leptospiraceae</taxon>
        <taxon>Leptospira</taxon>
    </lineage>
</organism>